<keyword id="KW-0687">Ribonucleoprotein</keyword>
<keyword id="KW-0689">Ribosomal protein</keyword>
<keyword id="KW-0694">RNA-binding</keyword>
<keyword id="KW-0699">rRNA-binding</keyword>
<keyword id="KW-0820">tRNA-binding</keyword>
<organism>
    <name type="scientific">Edwardsiella ictaluri (strain 93-146)</name>
    <dbReference type="NCBI Taxonomy" id="634503"/>
    <lineage>
        <taxon>Bacteria</taxon>
        <taxon>Pseudomonadati</taxon>
        <taxon>Pseudomonadota</taxon>
        <taxon>Gammaproteobacteria</taxon>
        <taxon>Enterobacterales</taxon>
        <taxon>Hafniaceae</taxon>
        <taxon>Edwardsiella</taxon>
    </lineage>
</organism>
<evidence type="ECO:0000255" key="1">
    <source>
        <dbReference type="HAMAP-Rule" id="MF_01333"/>
    </source>
</evidence>
<evidence type="ECO:0000305" key="2"/>
<accession>C5BGL3</accession>
<reference key="1">
    <citation type="submission" date="2009-03" db="EMBL/GenBank/DDBJ databases">
        <title>Complete genome sequence of Edwardsiella ictaluri 93-146.</title>
        <authorList>
            <person name="Williams M.L."/>
            <person name="Gillaspy A.F."/>
            <person name="Dyer D.W."/>
            <person name="Thune R.L."/>
            <person name="Waldbieser G.C."/>
            <person name="Schuster S.C."/>
            <person name="Gipson J."/>
            <person name="Zaitshik J."/>
            <person name="Landry C."/>
            <person name="Lawrence M.L."/>
        </authorList>
    </citation>
    <scope>NUCLEOTIDE SEQUENCE [LARGE SCALE GENOMIC DNA]</scope>
    <source>
        <strain>93-146</strain>
    </source>
</reference>
<protein>
    <recommendedName>
        <fullName evidence="1">Large ribosomal subunit protein uL5</fullName>
    </recommendedName>
    <alternativeName>
        <fullName evidence="2">50S ribosomal protein L5</fullName>
    </alternativeName>
</protein>
<feature type="chain" id="PRO_1000214627" description="Large ribosomal subunit protein uL5">
    <location>
        <begin position="1"/>
        <end position="179"/>
    </location>
</feature>
<dbReference type="EMBL" id="CP001600">
    <property type="protein sequence ID" value="ACR70710.1"/>
    <property type="molecule type" value="Genomic_DNA"/>
</dbReference>
<dbReference type="RefSeq" id="WP_012850024.1">
    <property type="nucleotide sequence ID" value="NZ_CP169062.1"/>
</dbReference>
<dbReference type="SMR" id="C5BGL3"/>
<dbReference type="STRING" id="67780.B6E78_09510"/>
<dbReference type="GeneID" id="72529989"/>
<dbReference type="KEGG" id="eic:NT01EI_3582"/>
<dbReference type="HOGENOM" id="CLU_061015_2_1_6"/>
<dbReference type="OrthoDB" id="9806626at2"/>
<dbReference type="Proteomes" id="UP000001485">
    <property type="component" value="Chromosome"/>
</dbReference>
<dbReference type="GO" id="GO:1990904">
    <property type="term" value="C:ribonucleoprotein complex"/>
    <property type="evidence" value="ECO:0007669"/>
    <property type="project" value="UniProtKB-KW"/>
</dbReference>
<dbReference type="GO" id="GO:0005840">
    <property type="term" value="C:ribosome"/>
    <property type="evidence" value="ECO:0007669"/>
    <property type="project" value="UniProtKB-KW"/>
</dbReference>
<dbReference type="GO" id="GO:0019843">
    <property type="term" value="F:rRNA binding"/>
    <property type="evidence" value="ECO:0007669"/>
    <property type="project" value="UniProtKB-UniRule"/>
</dbReference>
<dbReference type="GO" id="GO:0003735">
    <property type="term" value="F:structural constituent of ribosome"/>
    <property type="evidence" value="ECO:0007669"/>
    <property type="project" value="InterPro"/>
</dbReference>
<dbReference type="GO" id="GO:0000049">
    <property type="term" value="F:tRNA binding"/>
    <property type="evidence" value="ECO:0007669"/>
    <property type="project" value="UniProtKB-UniRule"/>
</dbReference>
<dbReference type="GO" id="GO:0006412">
    <property type="term" value="P:translation"/>
    <property type="evidence" value="ECO:0007669"/>
    <property type="project" value="UniProtKB-UniRule"/>
</dbReference>
<dbReference type="FunFam" id="3.30.1440.10:FF:000001">
    <property type="entry name" value="50S ribosomal protein L5"/>
    <property type="match status" value="1"/>
</dbReference>
<dbReference type="Gene3D" id="3.30.1440.10">
    <property type="match status" value="1"/>
</dbReference>
<dbReference type="HAMAP" id="MF_01333_B">
    <property type="entry name" value="Ribosomal_uL5_B"/>
    <property type="match status" value="1"/>
</dbReference>
<dbReference type="InterPro" id="IPR002132">
    <property type="entry name" value="Ribosomal_uL5"/>
</dbReference>
<dbReference type="InterPro" id="IPR020930">
    <property type="entry name" value="Ribosomal_uL5_bac-type"/>
</dbReference>
<dbReference type="InterPro" id="IPR031309">
    <property type="entry name" value="Ribosomal_uL5_C"/>
</dbReference>
<dbReference type="InterPro" id="IPR020929">
    <property type="entry name" value="Ribosomal_uL5_CS"/>
</dbReference>
<dbReference type="InterPro" id="IPR022803">
    <property type="entry name" value="Ribosomal_uL5_dom_sf"/>
</dbReference>
<dbReference type="InterPro" id="IPR031310">
    <property type="entry name" value="Ribosomal_uL5_N"/>
</dbReference>
<dbReference type="NCBIfam" id="NF000585">
    <property type="entry name" value="PRK00010.1"/>
    <property type="match status" value="1"/>
</dbReference>
<dbReference type="PANTHER" id="PTHR11994">
    <property type="entry name" value="60S RIBOSOMAL PROTEIN L11-RELATED"/>
    <property type="match status" value="1"/>
</dbReference>
<dbReference type="Pfam" id="PF00281">
    <property type="entry name" value="Ribosomal_L5"/>
    <property type="match status" value="1"/>
</dbReference>
<dbReference type="Pfam" id="PF00673">
    <property type="entry name" value="Ribosomal_L5_C"/>
    <property type="match status" value="1"/>
</dbReference>
<dbReference type="PIRSF" id="PIRSF002161">
    <property type="entry name" value="Ribosomal_L5"/>
    <property type="match status" value="1"/>
</dbReference>
<dbReference type="SUPFAM" id="SSF55282">
    <property type="entry name" value="RL5-like"/>
    <property type="match status" value="1"/>
</dbReference>
<dbReference type="PROSITE" id="PS00358">
    <property type="entry name" value="RIBOSOMAL_L5"/>
    <property type="match status" value="1"/>
</dbReference>
<gene>
    <name evidence="1" type="primary">rplE</name>
    <name type="ordered locus">NT01EI_3582</name>
</gene>
<comment type="function">
    <text evidence="1">This is one of the proteins that bind and probably mediate the attachment of the 5S RNA into the large ribosomal subunit, where it forms part of the central protuberance. In the 70S ribosome it contacts protein S13 of the 30S subunit (bridge B1b), connecting the 2 subunits; this bridge is implicated in subunit movement. Contacts the P site tRNA; the 5S rRNA and some of its associated proteins might help stabilize positioning of ribosome-bound tRNAs.</text>
</comment>
<comment type="subunit">
    <text evidence="1">Part of the 50S ribosomal subunit; part of the 5S rRNA/L5/L18/L25 subcomplex. Contacts the 5S rRNA and the P site tRNA. Forms a bridge to the 30S subunit in the 70S ribosome.</text>
</comment>
<comment type="similarity">
    <text evidence="1">Belongs to the universal ribosomal protein uL5 family.</text>
</comment>
<proteinExistence type="inferred from homology"/>
<sequence length="179" mass="20347">MAKLHDYYKDEVVKKLMTEFNYNSVMQVPRVEKITLNMGVGEAIADKKLLDNAAADLTAISGQKPLITKARKSVAGFKIRQGYPIGCKVTLRGERMWEFFERLISIAVPRIRDFRGLSAKSFDGRGNYSMGVREQIIFPEIDYDKVDRVRGLDITITTTAKSDEEGRALLTAFNFPFRK</sequence>
<name>RL5_EDWI9</name>